<evidence type="ECO:0000255" key="1">
    <source>
        <dbReference type="HAMAP-Rule" id="MF_00169"/>
    </source>
</evidence>
<dbReference type="EC" id="4.2.1.10" evidence="1"/>
<dbReference type="EMBL" id="AE017180">
    <property type="protein sequence ID" value="AAR35398.1"/>
    <property type="molecule type" value="Genomic_DNA"/>
</dbReference>
<dbReference type="RefSeq" id="NP_953071.1">
    <property type="nucleotide sequence ID" value="NC_002939.5"/>
</dbReference>
<dbReference type="RefSeq" id="WP_010942665.1">
    <property type="nucleotide sequence ID" value="NC_002939.5"/>
</dbReference>
<dbReference type="SMR" id="Q74BL9"/>
<dbReference type="STRING" id="243231.GSU2022"/>
<dbReference type="EnsemblBacteria" id="AAR35398">
    <property type="protein sequence ID" value="AAR35398"/>
    <property type="gene ID" value="GSU2022"/>
</dbReference>
<dbReference type="KEGG" id="gsu:GSU2022"/>
<dbReference type="PATRIC" id="fig|243231.5.peg.2058"/>
<dbReference type="eggNOG" id="COG0757">
    <property type="taxonomic scope" value="Bacteria"/>
</dbReference>
<dbReference type="HOGENOM" id="CLU_090968_1_0_7"/>
<dbReference type="InParanoid" id="Q74BL9"/>
<dbReference type="OrthoDB" id="9790793at2"/>
<dbReference type="UniPathway" id="UPA00053">
    <property type="reaction ID" value="UER00086"/>
</dbReference>
<dbReference type="Proteomes" id="UP000000577">
    <property type="component" value="Chromosome"/>
</dbReference>
<dbReference type="GO" id="GO:0003855">
    <property type="term" value="F:3-dehydroquinate dehydratase activity"/>
    <property type="evidence" value="ECO:0000318"/>
    <property type="project" value="GO_Central"/>
</dbReference>
<dbReference type="GO" id="GO:0008652">
    <property type="term" value="P:amino acid biosynthetic process"/>
    <property type="evidence" value="ECO:0007669"/>
    <property type="project" value="UniProtKB-KW"/>
</dbReference>
<dbReference type="GO" id="GO:0009073">
    <property type="term" value="P:aromatic amino acid family biosynthetic process"/>
    <property type="evidence" value="ECO:0007669"/>
    <property type="project" value="UniProtKB-KW"/>
</dbReference>
<dbReference type="GO" id="GO:0009423">
    <property type="term" value="P:chorismate biosynthetic process"/>
    <property type="evidence" value="ECO:0007669"/>
    <property type="project" value="UniProtKB-UniRule"/>
</dbReference>
<dbReference type="GO" id="GO:0019631">
    <property type="term" value="P:quinate catabolic process"/>
    <property type="evidence" value="ECO:0000318"/>
    <property type="project" value="GO_Central"/>
</dbReference>
<dbReference type="CDD" id="cd00466">
    <property type="entry name" value="DHQase_II"/>
    <property type="match status" value="1"/>
</dbReference>
<dbReference type="Gene3D" id="3.40.50.9100">
    <property type="entry name" value="Dehydroquinase, class II"/>
    <property type="match status" value="1"/>
</dbReference>
<dbReference type="HAMAP" id="MF_00169">
    <property type="entry name" value="AroQ"/>
    <property type="match status" value="1"/>
</dbReference>
<dbReference type="InterPro" id="IPR001874">
    <property type="entry name" value="DHquinase_II"/>
</dbReference>
<dbReference type="InterPro" id="IPR018509">
    <property type="entry name" value="DHquinase_II_CS"/>
</dbReference>
<dbReference type="InterPro" id="IPR036441">
    <property type="entry name" value="DHquinase_II_sf"/>
</dbReference>
<dbReference type="NCBIfam" id="TIGR01088">
    <property type="entry name" value="aroQ"/>
    <property type="match status" value="1"/>
</dbReference>
<dbReference type="NCBIfam" id="NF003804">
    <property type="entry name" value="PRK05395.1-1"/>
    <property type="match status" value="1"/>
</dbReference>
<dbReference type="NCBIfam" id="NF003805">
    <property type="entry name" value="PRK05395.1-2"/>
    <property type="match status" value="1"/>
</dbReference>
<dbReference type="NCBIfam" id="NF003806">
    <property type="entry name" value="PRK05395.1-3"/>
    <property type="match status" value="1"/>
</dbReference>
<dbReference type="NCBIfam" id="NF003807">
    <property type="entry name" value="PRK05395.1-4"/>
    <property type="match status" value="1"/>
</dbReference>
<dbReference type="PANTHER" id="PTHR21272">
    <property type="entry name" value="CATABOLIC 3-DEHYDROQUINASE"/>
    <property type="match status" value="1"/>
</dbReference>
<dbReference type="PANTHER" id="PTHR21272:SF3">
    <property type="entry name" value="CATABOLIC 3-DEHYDROQUINASE"/>
    <property type="match status" value="1"/>
</dbReference>
<dbReference type="Pfam" id="PF01220">
    <property type="entry name" value="DHquinase_II"/>
    <property type="match status" value="1"/>
</dbReference>
<dbReference type="PIRSF" id="PIRSF001399">
    <property type="entry name" value="DHquinase_II"/>
    <property type="match status" value="1"/>
</dbReference>
<dbReference type="SUPFAM" id="SSF52304">
    <property type="entry name" value="Type II 3-dehydroquinate dehydratase"/>
    <property type="match status" value="1"/>
</dbReference>
<dbReference type="PROSITE" id="PS01029">
    <property type="entry name" value="DEHYDROQUINASE_II"/>
    <property type="match status" value="1"/>
</dbReference>
<name>AROQ_GEOSL</name>
<proteinExistence type="inferred from homology"/>
<accession>Q74BL9</accession>
<reference key="1">
    <citation type="journal article" date="2003" name="Science">
        <title>Genome of Geobacter sulfurreducens: metal reduction in subsurface environments.</title>
        <authorList>
            <person name="Methe B.A."/>
            <person name="Nelson K.E."/>
            <person name="Eisen J.A."/>
            <person name="Paulsen I.T."/>
            <person name="Nelson W.C."/>
            <person name="Heidelberg J.F."/>
            <person name="Wu D."/>
            <person name="Wu M."/>
            <person name="Ward N.L."/>
            <person name="Beanan M.J."/>
            <person name="Dodson R.J."/>
            <person name="Madupu R."/>
            <person name="Brinkac L.M."/>
            <person name="Daugherty S.C."/>
            <person name="DeBoy R.T."/>
            <person name="Durkin A.S."/>
            <person name="Gwinn M.L."/>
            <person name="Kolonay J.F."/>
            <person name="Sullivan S.A."/>
            <person name="Haft D.H."/>
            <person name="Selengut J."/>
            <person name="Davidsen T.M."/>
            <person name="Zafar N."/>
            <person name="White O."/>
            <person name="Tran B."/>
            <person name="Romero C."/>
            <person name="Forberger H.A."/>
            <person name="Weidman J.F."/>
            <person name="Khouri H.M."/>
            <person name="Feldblyum T.V."/>
            <person name="Utterback T.R."/>
            <person name="Van Aken S.E."/>
            <person name="Lovley D.R."/>
            <person name="Fraser C.M."/>
        </authorList>
    </citation>
    <scope>NUCLEOTIDE SEQUENCE [LARGE SCALE GENOMIC DNA]</scope>
    <source>
        <strain>ATCC 51573 / DSM 12127 / PCA</strain>
    </source>
</reference>
<organism>
    <name type="scientific">Geobacter sulfurreducens (strain ATCC 51573 / DSM 12127 / PCA)</name>
    <dbReference type="NCBI Taxonomy" id="243231"/>
    <lineage>
        <taxon>Bacteria</taxon>
        <taxon>Pseudomonadati</taxon>
        <taxon>Thermodesulfobacteriota</taxon>
        <taxon>Desulfuromonadia</taxon>
        <taxon>Geobacterales</taxon>
        <taxon>Geobacteraceae</taxon>
        <taxon>Geobacter</taxon>
    </lineage>
</organism>
<gene>
    <name evidence="1" type="primary">aroQ</name>
    <name type="ordered locus">GSU2022</name>
</gene>
<feature type="chain" id="PRO_0000159900" description="3-dehydroquinate dehydratase">
    <location>
        <begin position="1"/>
        <end position="150"/>
    </location>
</feature>
<feature type="active site" description="Proton acceptor" evidence="1">
    <location>
        <position position="22"/>
    </location>
</feature>
<feature type="active site" description="Proton donor" evidence="1">
    <location>
        <position position="99"/>
    </location>
</feature>
<feature type="binding site" evidence="1">
    <location>
        <position position="73"/>
    </location>
    <ligand>
        <name>substrate</name>
    </ligand>
</feature>
<feature type="binding site" evidence="1">
    <location>
        <position position="79"/>
    </location>
    <ligand>
        <name>substrate</name>
    </ligand>
</feature>
<feature type="binding site" evidence="1">
    <location>
        <position position="86"/>
    </location>
    <ligand>
        <name>substrate</name>
    </ligand>
</feature>
<feature type="binding site" evidence="1">
    <location>
        <begin position="100"/>
        <end position="101"/>
    </location>
    <ligand>
        <name>substrate</name>
    </ligand>
</feature>
<feature type="binding site" evidence="1">
    <location>
        <position position="110"/>
    </location>
    <ligand>
        <name>substrate</name>
    </ligand>
</feature>
<feature type="site" description="Transition state stabilizer" evidence="1">
    <location>
        <position position="17"/>
    </location>
</feature>
<comment type="function">
    <text evidence="1">Catalyzes a trans-dehydration via an enolate intermediate.</text>
</comment>
<comment type="catalytic activity">
    <reaction evidence="1">
        <text>3-dehydroquinate = 3-dehydroshikimate + H2O</text>
        <dbReference type="Rhea" id="RHEA:21096"/>
        <dbReference type="ChEBI" id="CHEBI:15377"/>
        <dbReference type="ChEBI" id="CHEBI:16630"/>
        <dbReference type="ChEBI" id="CHEBI:32364"/>
        <dbReference type="EC" id="4.2.1.10"/>
    </reaction>
</comment>
<comment type="pathway">
    <text evidence="1">Metabolic intermediate biosynthesis; chorismate biosynthesis; chorismate from D-erythrose 4-phosphate and phosphoenolpyruvate: step 3/7.</text>
</comment>
<comment type="subunit">
    <text evidence="1">Homododecamer.</text>
</comment>
<comment type="similarity">
    <text evidence="1">Belongs to the type-II 3-dehydroquinase family.</text>
</comment>
<sequence length="150" mass="15833">MRILVVHGPNLNMLGTREPGIYGTLTLDRINESLVALADELGCTISPFQSNSEGALVDAIQAAAGTCDGILINPAAYTHTSVAIRDALAAVALPVVEVHLSNIHRREEFRSHSFVAAVAVGQITGFGADSYLLGLRALFTHIEKGIVTKG</sequence>
<protein>
    <recommendedName>
        <fullName evidence="1">3-dehydroquinate dehydratase</fullName>
        <shortName evidence="1">3-dehydroquinase</shortName>
        <ecNumber evidence="1">4.2.1.10</ecNumber>
    </recommendedName>
    <alternativeName>
        <fullName evidence="1">Type II DHQase</fullName>
    </alternativeName>
</protein>
<keyword id="KW-0028">Amino-acid biosynthesis</keyword>
<keyword id="KW-0057">Aromatic amino acid biosynthesis</keyword>
<keyword id="KW-0456">Lyase</keyword>
<keyword id="KW-1185">Reference proteome</keyword>